<gene>
    <name type="primary">TWIST1</name>
    <name type="synonym">TWIST</name>
</gene>
<sequence length="203" mass="21000">MMQDVSSSPVSPADDSLSNSEEEPDRQQPQSGKRGGRKRRSSRRSAGGGAGPGGAAGGGVGGGDEPGSPAQGKRGKKSAGCGGGGGSAGGGGGSSSGGGSPQSYEELQTQRVMANVRGRQRTQSLNEAFAALRKIIPTLPSDKLSKIQTLKLAARYIDFLYQVLQSDELDSKMASCSYVAHERLSYAFSVWRMEGAWSMSASH</sequence>
<reference key="1">
    <citation type="journal article" date="2002" name="Dev. Genes Evol.">
        <title>Natural Twist protein variants in a panel of eleven non-human primates: possible implications of Twist gene-tree for primate species tree.</title>
        <authorList>
            <person name="Gachot-Neveu H."/>
            <person name="Stoetzel C."/>
            <person name="Quillet R."/>
            <person name="Dollfus H."/>
            <person name="Perrin-Schmitt F."/>
        </authorList>
    </citation>
    <scope>NUCLEOTIDE SEQUENCE [GENOMIC DNA]</scope>
    <source>
        <tissue>Tail</tissue>
    </source>
</reference>
<protein>
    <recommendedName>
        <fullName>Twist-related protein 1</fullName>
    </recommendedName>
</protein>
<name>TWST1_CALJA</name>
<accession>Q8MIH1</accession>
<organism>
    <name type="scientific">Callithrix jacchus</name>
    <name type="common">White-tufted-ear marmoset</name>
    <dbReference type="NCBI Taxonomy" id="9483"/>
    <lineage>
        <taxon>Eukaryota</taxon>
        <taxon>Metazoa</taxon>
        <taxon>Chordata</taxon>
        <taxon>Craniata</taxon>
        <taxon>Vertebrata</taxon>
        <taxon>Euteleostomi</taxon>
        <taxon>Mammalia</taxon>
        <taxon>Eutheria</taxon>
        <taxon>Euarchontoglires</taxon>
        <taxon>Primates</taxon>
        <taxon>Haplorrhini</taxon>
        <taxon>Platyrrhini</taxon>
        <taxon>Cebidae</taxon>
        <taxon>Callitrichinae</taxon>
        <taxon>Callithrix</taxon>
        <taxon>Callithrix</taxon>
    </lineage>
</organism>
<feature type="chain" id="PRO_0000127480" description="Twist-related protein 1">
    <location>
        <begin position="1"/>
        <end position="203"/>
    </location>
</feature>
<feature type="domain" description="bHLH" evidence="3">
    <location>
        <begin position="109"/>
        <end position="160"/>
    </location>
</feature>
<feature type="region of interest" description="Disordered" evidence="4">
    <location>
        <begin position="1"/>
        <end position="105"/>
    </location>
</feature>
<feature type="region of interest" description="Sufficient for transactivation activity" evidence="1">
    <location>
        <begin position="162"/>
        <end position="192"/>
    </location>
</feature>
<feature type="compositionally biased region" description="Low complexity" evidence="4">
    <location>
        <begin position="1"/>
        <end position="18"/>
    </location>
</feature>
<feature type="compositionally biased region" description="Basic residues" evidence="4">
    <location>
        <begin position="34"/>
        <end position="43"/>
    </location>
</feature>
<feature type="compositionally biased region" description="Gly residues" evidence="4">
    <location>
        <begin position="46"/>
        <end position="65"/>
    </location>
</feature>
<feature type="compositionally biased region" description="Gly residues" evidence="4">
    <location>
        <begin position="80"/>
        <end position="100"/>
    </location>
</feature>
<keyword id="KW-0010">Activator</keyword>
<keyword id="KW-0090">Biological rhythms</keyword>
<keyword id="KW-0217">Developmental protein</keyword>
<keyword id="KW-0221">Differentiation</keyword>
<keyword id="KW-0238">DNA-binding</keyword>
<keyword id="KW-0517">Myogenesis</keyword>
<keyword id="KW-0539">Nucleus</keyword>
<keyword id="KW-1185">Reference proteome</keyword>
<keyword id="KW-0678">Repressor</keyword>
<keyword id="KW-0804">Transcription</keyword>
<keyword id="KW-0805">Transcription regulation</keyword>
<evidence type="ECO:0000250" key="1"/>
<evidence type="ECO:0000250" key="2">
    <source>
        <dbReference type="UniProtKB" id="P26687"/>
    </source>
</evidence>
<evidence type="ECO:0000255" key="3">
    <source>
        <dbReference type="PROSITE-ProRule" id="PRU00981"/>
    </source>
</evidence>
<evidence type="ECO:0000256" key="4">
    <source>
        <dbReference type="SAM" id="MobiDB-lite"/>
    </source>
</evidence>
<proteinExistence type="inferred from homology"/>
<dbReference type="EMBL" id="AJ488165">
    <property type="protein sequence ID" value="CAD32479.1"/>
    <property type="molecule type" value="Genomic_DNA"/>
</dbReference>
<dbReference type="SMR" id="Q8MIH1"/>
<dbReference type="FunCoup" id="Q8MIH1">
    <property type="interactions" value="1264"/>
</dbReference>
<dbReference type="STRING" id="9483.ENSCJAP00000072433"/>
<dbReference type="InParanoid" id="Q8MIH1"/>
<dbReference type="Proteomes" id="UP000008225">
    <property type="component" value="Unplaced"/>
</dbReference>
<dbReference type="GO" id="GO:0005634">
    <property type="term" value="C:nucleus"/>
    <property type="evidence" value="ECO:0007669"/>
    <property type="project" value="UniProtKB-SubCell"/>
</dbReference>
<dbReference type="GO" id="GO:0000981">
    <property type="term" value="F:DNA-binding transcription factor activity, RNA polymerase II-specific"/>
    <property type="evidence" value="ECO:0007669"/>
    <property type="project" value="InterPro"/>
</dbReference>
<dbReference type="GO" id="GO:0046983">
    <property type="term" value="F:protein dimerization activity"/>
    <property type="evidence" value="ECO:0007669"/>
    <property type="project" value="InterPro"/>
</dbReference>
<dbReference type="GO" id="GO:0000977">
    <property type="term" value="F:RNA polymerase II transcription regulatory region sequence-specific DNA binding"/>
    <property type="evidence" value="ECO:0007669"/>
    <property type="project" value="TreeGrafter"/>
</dbReference>
<dbReference type="GO" id="GO:0030154">
    <property type="term" value="P:cell differentiation"/>
    <property type="evidence" value="ECO:0007669"/>
    <property type="project" value="UniProtKB-KW"/>
</dbReference>
<dbReference type="GO" id="GO:0007517">
    <property type="term" value="P:muscle organ development"/>
    <property type="evidence" value="ECO:0007669"/>
    <property type="project" value="UniProtKB-KW"/>
</dbReference>
<dbReference type="GO" id="GO:0045892">
    <property type="term" value="P:negative regulation of DNA-templated transcription"/>
    <property type="evidence" value="ECO:0000250"/>
    <property type="project" value="UniProtKB"/>
</dbReference>
<dbReference type="GO" id="GO:0048511">
    <property type="term" value="P:rhythmic process"/>
    <property type="evidence" value="ECO:0007669"/>
    <property type="project" value="UniProtKB-KW"/>
</dbReference>
<dbReference type="CDD" id="cd11412">
    <property type="entry name" value="bHLH_TS_TWIST1"/>
    <property type="match status" value="1"/>
</dbReference>
<dbReference type="FunFam" id="4.10.280.10:FF:000030">
    <property type="entry name" value="Twist transcription factor"/>
    <property type="match status" value="1"/>
</dbReference>
<dbReference type="Gene3D" id="4.10.280.10">
    <property type="entry name" value="Helix-loop-helix DNA-binding domain"/>
    <property type="match status" value="1"/>
</dbReference>
<dbReference type="InterPro" id="IPR011598">
    <property type="entry name" value="bHLH_dom"/>
</dbReference>
<dbReference type="InterPro" id="IPR050283">
    <property type="entry name" value="E-box_TF_Regulators"/>
</dbReference>
<dbReference type="InterPro" id="IPR036638">
    <property type="entry name" value="HLH_DNA-bd_sf"/>
</dbReference>
<dbReference type="InterPro" id="IPR047093">
    <property type="entry name" value="TWIST1_bHLH"/>
</dbReference>
<dbReference type="PANTHER" id="PTHR23349">
    <property type="entry name" value="BASIC HELIX-LOOP-HELIX TRANSCRIPTION FACTOR, TWIST"/>
    <property type="match status" value="1"/>
</dbReference>
<dbReference type="PANTHER" id="PTHR23349:SF64">
    <property type="entry name" value="TWIST-RELATED PROTEIN 1"/>
    <property type="match status" value="1"/>
</dbReference>
<dbReference type="Pfam" id="PF00010">
    <property type="entry name" value="HLH"/>
    <property type="match status" value="1"/>
</dbReference>
<dbReference type="SMART" id="SM00353">
    <property type="entry name" value="HLH"/>
    <property type="match status" value="1"/>
</dbReference>
<dbReference type="SUPFAM" id="SSF47459">
    <property type="entry name" value="HLH, helix-loop-helix DNA-binding domain"/>
    <property type="match status" value="1"/>
</dbReference>
<dbReference type="PROSITE" id="PS50888">
    <property type="entry name" value="BHLH"/>
    <property type="match status" value="1"/>
</dbReference>
<comment type="function">
    <text evidence="2">Acts as a transcriptional regulator. Inhibits myogenesis by sequestrating E proteins, inhibiting trans-activation by MEF2, and inhibiting DNA-binding by MYOD1 through physical interaction. This interaction probably involves the basic domains of both proteins. Also represses expression of pro-inflammatory cytokines such as TNFA and IL1B. Regulates cranial suture patterning and fusion. Activates transcription as a heterodimer with E proteins. Regulates gene expression differentially, depending on dimer composition. Homodimers induce expression of FGFR2 and POSTN while heterodimers repress FGFR2 and POSTN expression and induce THBS1 expression. Heterodimerization is also required for osteoblast differentiation. Represses the activity of the circadian transcriptional activator: NPAS2-BMAL1 heterodimer (By similarity).</text>
</comment>
<comment type="subunit">
    <text evidence="2">Efficient DNA binding requires dimerization with another bHLH protein. Homodimer or heterodimer with E proteins such as TCF3. ID1 binds preferentially to TCF3 but does not interact efficiently with TWIST1 so ID1 levels control the amount of TCF3 available to dimerize with TWIST and thus determine the type of dimer formed (By similarity).</text>
</comment>
<comment type="subcellular location">
    <subcellularLocation>
        <location evidence="3">Nucleus</location>
    </subcellularLocation>
</comment>